<keyword id="KW-0067">ATP-binding</keyword>
<keyword id="KW-0256">Endoplasmic reticulum</keyword>
<keyword id="KW-0325">Glycoprotein</keyword>
<keyword id="KW-0547">Nucleotide-binding</keyword>
<keyword id="KW-1185">Reference proteome</keyword>
<reference key="1">
    <citation type="journal article" date="1991" name="Plant Cell">
        <title>The tobacco luminal binding protein is encoded by a multigene family.</title>
        <authorList>
            <person name="Denecke J."/>
            <person name="Goldman M.H."/>
            <person name="Demolder J."/>
            <person name="Seurinck J."/>
            <person name="Botterman J."/>
        </authorList>
    </citation>
    <scope>NUCLEOTIDE SEQUENCE [MRNA]</scope>
</reference>
<reference key="2">
    <citation type="journal article" date="1991" name="Plant Cell">
        <authorList>
            <person name="Denecke J."/>
            <person name="Goldman M.H."/>
            <person name="Demolder J."/>
            <person name="Seurinck J."/>
            <person name="Botterman J."/>
        </authorList>
    </citation>
    <scope>ERRATUM OF PUBMED:1822990</scope>
</reference>
<dbReference type="EMBL" id="X60062">
    <property type="protein sequence ID" value="CAA42664.1"/>
    <property type="molecule type" value="mRNA"/>
</dbReference>
<dbReference type="PIR" id="S21881">
    <property type="entry name" value="S21881"/>
</dbReference>
<dbReference type="SMR" id="Q03686"/>
<dbReference type="STRING" id="4097.Q03686"/>
<dbReference type="GlyCosmos" id="Q03686">
    <property type="glycosylation" value="1 site, No reported glycans"/>
</dbReference>
<dbReference type="PaxDb" id="4097-Q03686"/>
<dbReference type="Proteomes" id="UP000084051">
    <property type="component" value="Unplaced"/>
</dbReference>
<dbReference type="GO" id="GO:0005788">
    <property type="term" value="C:endoplasmic reticulum lumen"/>
    <property type="evidence" value="ECO:0007669"/>
    <property type="project" value="UniProtKB-SubCell"/>
</dbReference>
<dbReference type="GO" id="GO:0005524">
    <property type="term" value="F:ATP binding"/>
    <property type="evidence" value="ECO:0007669"/>
    <property type="project" value="UniProtKB-KW"/>
</dbReference>
<dbReference type="GO" id="GO:0140662">
    <property type="term" value="F:ATP-dependent protein folding chaperone"/>
    <property type="evidence" value="ECO:0007669"/>
    <property type="project" value="InterPro"/>
</dbReference>
<dbReference type="FunFam" id="2.60.34.10:FF:000002">
    <property type="entry name" value="Heat shock 70 kDa"/>
    <property type="match status" value="1"/>
</dbReference>
<dbReference type="FunFam" id="1.20.1270.10:FF:000015">
    <property type="entry name" value="Luminal-binding protein 5"/>
    <property type="match status" value="1"/>
</dbReference>
<dbReference type="Gene3D" id="1.20.1270.10">
    <property type="match status" value="1"/>
</dbReference>
<dbReference type="Gene3D" id="3.30.420.40">
    <property type="match status" value="2"/>
</dbReference>
<dbReference type="Gene3D" id="2.60.34.10">
    <property type="entry name" value="Substrate Binding Domain Of DNAk, Chain A, domain 1"/>
    <property type="match status" value="1"/>
</dbReference>
<dbReference type="InterPro" id="IPR043129">
    <property type="entry name" value="ATPase_NBD"/>
</dbReference>
<dbReference type="InterPro" id="IPR029048">
    <property type="entry name" value="HSP70_C_sf"/>
</dbReference>
<dbReference type="InterPro" id="IPR029047">
    <property type="entry name" value="HSP70_peptide-bd_sf"/>
</dbReference>
<dbReference type="InterPro" id="IPR013126">
    <property type="entry name" value="Hsp_70_fam"/>
</dbReference>
<dbReference type="PANTHER" id="PTHR19375">
    <property type="entry name" value="HEAT SHOCK PROTEIN 70KDA"/>
    <property type="match status" value="1"/>
</dbReference>
<dbReference type="Pfam" id="PF00012">
    <property type="entry name" value="HSP70"/>
    <property type="match status" value="1"/>
</dbReference>
<dbReference type="PRINTS" id="PR00301">
    <property type="entry name" value="HEATSHOCK70"/>
</dbReference>
<dbReference type="SUPFAM" id="SSF53067">
    <property type="entry name" value="Actin-like ATPase domain"/>
    <property type="match status" value="1"/>
</dbReference>
<dbReference type="SUPFAM" id="SSF100934">
    <property type="entry name" value="Heat shock protein 70kD (HSP70), C-terminal subdomain"/>
    <property type="match status" value="1"/>
</dbReference>
<dbReference type="SUPFAM" id="SSF100920">
    <property type="entry name" value="Heat shock protein 70kD (HSP70), peptide-binding domain"/>
    <property type="match status" value="1"/>
</dbReference>
<dbReference type="PROSITE" id="PS00014">
    <property type="entry name" value="ER_TARGET"/>
    <property type="match status" value="1"/>
</dbReference>
<feature type="chain" id="PRO_0000078669" description="Luminal-binding protein 8">
    <location>
        <begin position="1" status="less than"/>
        <end position="293"/>
    </location>
</feature>
<feature type="region of interest" description="Disordered" evidence="3">
    <location>
        <begin position="270"/>
        <end position="293"/>
    </location>
</feature>
<feature type="short sequence motif" description="Prevents secretion from ER" evidence="2">
    <location>
        <begin position="290"/>
        <end position="293"/>
    </location>
</feature>
<feature type="compositionally biased region" description="Acidic residues" evidence="3">
    <location>
        <begin position="284"/>
        <end position="293"/>
    </location>
</feature>
<feature type="glycosylation site" description="N-linked (GlcNAc...) asparagine" evidence="1">
    <location>
        <position position="244"/>
    </location>
</feature>
<feature type="non-terminal residue">
    <location>
        <position position="1"/>
    </location>
</feature>
<evidence type="ECO:0000255" key="1"/>
<evidence type="ECO:0000255" key="2">
    <source>
        <dbReference type="PROSITE-ProRule" id="PRU10138"/>
    </source>
</evidence>
<evidence type="ECO:0000256" key="3">
    <source>
        <dbReference type="SAM" id="MobiDB-lite"/>
    </source>
</evidence>
<evidence type="ECO:0000305" key="4"/>
<proteinExistence type="evidence at transcript level"/>
<name>BIP8_TOBAC</name>
<comment type="function">
    <text>Probably plays a role in facilitating the assembly of multimeric protein complexes inside the ER.</text>
</comment>
<comment type="subcellular location">
    <subcellularLocation>
        <location>Endoplasmic reticulum lumen</location>
    </subcellularLocation>
</comment>
<comment type="similarity">
    <text evidence="4">Belongs to the heat shock protein 70 family.</text>
</comment>
<protein>
    <recommendedName>
        <fullName>Luminal-binding protein 8</fullName>
        <shortName>BiP 8</shortName>
    </recommendedName>
    <alternativeName>
        <fullName>78 kDa glucose-regulated protein homolog 8</fullName>
        <shortName>GRP-78-8</shortName>
    </alternativeName>
</protein>
<sequence>RIPKVQQLLKDYFDGKEPNKGVNPDEAVAYGAAVQGGILSGEGGDETKDILLLDVAPLTLGIETVGGVMTKLIPRNTVIPSKKSQVFTTYQDQQTTVTIQVFEGERSLTKDCRLLGKFDLTGIAPAPRGTPQIEVTFEVDANGILNVKAEDKASGKSEKITITNDKGRLSQEEIERMVKEAEEFAEEDKKVKERIDARNSLETYVYNMRNQINDKDKLADKLESDEKEKIETATKEALEWLDDNQSAEKEDYEEKLKEVEAVCNPIITAVYQKSGGAPGGESGASEDDDHDEL</sequence>
<organism>
    <name type="scientific">Nicotiana tabacum</name>
    <name type="common">Common tobacco</name>
    <dbReference type="NCBI Taxonomy" id="4097"/>
    <lineage>
        <taxon>Eukaryota</taxon>
        <taxon>Viridiplantae</taxon>
        <taxon>Streptophyta</taxon>
        <taxon>Embryophyta</taxon>
        <taxon>Tracheophyta</taxon>
        <taxon>Spermatophyta</taxon>
        <taxon>Magnoliopsida</taxon>
        <taxon>eudicotyledons</taxon>
        <taxon>Gunneridae</taxon>
        <taxon>Pentapetalae</taxon>
        <taxon>asterids</taxon>
        <taxon>lamiids</taxon>
        <taxon>Solanales</taxon>
        <taxon>Solanaceae</taxon>
        <taxon>Nicotianoideae</taxon>
        <taxon>Nicotianeae</taxon>
        <taxon>Nicotiana</taxon>
    </lineage>
</organism>
<gene>
    <name type="primary">BIP8</name>
</gene>
<accession>Q03686</accession>